<protein>
    <recommendedName>
        <fullName evidence="1">Tryptophan synthase beta chain</fullName>
        <ecNumber evidence="1">4.2.1.20</ecNumber>
    </recommendedName>
</protein>
<gene>
    <name evidence="1" type="primary">trpB</name>
    <name type="ordered locus">CYB_1508</name>
</gene>
<reference key="1">
    <citation type="journal article" date="2007" name="ISME J.">
        <title>Population level functional diversity in a microbial community revealed by comparative genomic and metagenomic analyses.</title>
        <authorList>
            <person name="Bhaya D."/>
            <person name="Grossman A.R."/>
            <person name="Steunou A.-S."/>
            <person name="Khuri N."/>
            <person name="Cohan F.M."/>
            <person name="Hamamura N."/>
            <person name="Melendrez M.C."/>
            <person name="Bateson M.M."/>
            <person name="Ward D.M."/>
            <person name="Heidelberg J.F."/>
        </authorList>
    </citation>
    <scope>NUCLEOTIDE SEQUENCE [LARGE SCALE GENOMIC DNA]</scope>
    <source>
        <strain>JA-2-3B'a(2-13)</strain>
    </source>
</reference>
<sequence>MTSASFAFSPRVLDPLDPQVRPDPQGRFGPFGGRFVPETLMSALTELEEAFEHHWRDPDFRAEFHNLLRDFVGRPSPLYFAQRLTEYYGGPQIYLKREDLNHTGAHKINNALGQVLLAVRMGKRRIIAETGAGQHGVATATVCARFGLECVIYMGALDMERQAPNVQRMRLLGAEVRGVESGTRTLKDALSEAIRDWVTNVETTHYVIGTVAGPHPYPKLVRAFHDVIGQETRQQCQEKWGGLPDVLLACVGGGSNALGLFNEFVRDPQVRLIGIEAAGEGLHTPRHAATLNRGRIGVLHGAMSYLLQDEEGQVQEAHSISAGLDYPGVGPEHSYLKEIGRAEYYAVTDDEAVEALLLLSRLEGIIPALETAHALAYLKTLAPQQGLRPANAIGPQQRVVVNCSGRGDKDLNTVFKYLQQRGRSF</sequence>
<proteinExistence type="inferred from homology"/>
<evidence type="ECO:0000255" key="1">
    <source>
        <dbReference type="HAMAP-Rule" id="MF_00133"/>
    </source>
</evidence>
<organism>
    <name type="scientific">Synechococcus sp. (strain JA-2-3B'a(2-13))</name>
    <name type="common">Cyanobacteria bacterium Yellowstone B-Prime</name>
    <dbReference type="NCBI Taxonomy" id="321332"/>
    <lineage>
        <taxon>Bacteria</taxon>
        <taxon>Bacillati</taxon>
        <taxon>Cyanobacteriota</taxon>
        <taxon>Cyanophyceae</taxon>
        <taxon>Synechococcales</taxon>
        <taxon>Synechococcaceae</taxon>
        <taxon>Synechococcus</taxon>
    </lineage>
</organism>
<accession>Q2JLD7</accession>
<dbReference type="EC" id="4.2.1.20" evidence="1"/>
<dbReference type="EMBL" id="CP000240">
    <property type="protein sequence ID" value="ABD02474.1"/>
    <property type="molecule type" value="Genomic_DNA"/>
</dbReference>
<dbReference type="RefSeq" id="WP_011433122.1">
    <property type="nucleotide sequence ID" value="NC_007776.1"/>
</dbReference>
<dbReference type="SMR" id="Q2JLD7"/>
<dbReference type="STRING" id="321332.CYB_1508"/>
<dbReference type="KEGG" id="cyb:CYB_1508"/>
<dbReference type="eggNOG" id="COG0133">
    <property type="taxonomic scope" value="Bacteria"/>
</dbReference>
<dbReference type="HOGENOM" id="CLU_016734_3_1_3"/>
<dbReference type="OrthoDB" id="9766131at2"/>
<dbReference type="UniPathway" id="UPA00035">
    <property type="reaction ID" value="UER00044"/>
</dbReference>
<dbReference type="Proteomes" id="UP000001938">
    <property type="component" value="Chromosome"/>
</dbReference>
<dbReference type="GO" id="GO:0005737">
    <property type="term" value="C:cytoplasm"/>
    <property type="evidence" value="ECO:0007669"/>
    <property type="project" value="TreeGrafter"/>
</dbReference>
<dbReference type="GO" id="GO:0004834">
    <property type="term" value="F:tryptophan synthase activity"/>
    <property type="evidence" value="ECO:0007669"/>
    <property type="project" value="UniProtKB-UniRule"/>
</dbReference>
<dbReference type="CDD" id="cd06446">
    <property type="entry name" value="Trp-synth_B"/>
    <property type="match status" value="1"/>
</dbReference>
<dbReference type="FunFam" id="3.40.50.1100:FF:000001">
    <property type="entry name" value="Tryptophan synthase beta chain"/>
    <property type="match status" value="1"/>
</dbReference>
<dbReference type="FunFam" id="3.40.50.1100:FF:000004">
    <property type="entry name" value="Tryptophan synthase beta chain"/>
    <property type="match status" value="1"/>
</dbReference>
<dbReference type="Gene3D" id="3.40.50.1100">
    <property type="match status" value="2"/>
</dbReference>
<dbReference type="HAMAP" id="MF_00133">
    <property type="entry name" value="Trp_synth_beta"/>
    <property type="match status" value="1"/>
</dbReference>
<dbReference type="InterPro" id="IPR006653">
    <property type="entry name" value="Trp_synth_b_CS"/>
</dbReference>
<dbReference type="InterPro" id="IPR006654">
    <property type="entry name" value="Trp_synth_beta"/>
</dbReference>
<dbReference type="InterPro" id="IPR023026">
    <property type="entry name" value="Trp_synth_beta/beta-like"/>
</dbReference>
<dbReference type="InterPro" id="IPR001926">
    <property type="entry name" value="TrpB-like_PALP"/>
</dbReference>
<dbReference type="InterPro" id="IPR036052">
    <property type="entry name" value="TrpB-like_PALP_sf"/>
</dbReference>
<dbReference type="NCBIfam" id="TIGR00263">
    <property type="entry name" value="trpB"/>
    <property type="match status" value="1"/>
</dbReference>
<dbReference type="PANTHER" id="PTHR48077:SF3">
    <property type="entry name" value="TRYPTOPHAN SYNTHASE"/>
    <property type="match status" value="1"/>
</dbReference>
<dbReference type="PANTHER" id="PTHR48077">
    <property type="entry name" value="TRYPTOPHAN SYNTHASE-RELATED"/>
    <property type="match status" value="1"/>
</dbReference>
<dbReference type="Pfam" id="PF00291">
    <property type="entry name" value="PALP"/>
    <property type="match status" value="1"/>
</dbReference>
<dbReference type="PIRSF" id="PIRSF001413">
    <property type="entry name" value="Trp_syn_beta"/>
    <property type="match status" value="1"/>
</dbReference>
<dbReference type="SUPFAM" id="SSF53686">
    <property type="entry name" value="Tryptophan synthase beta subunit-like PLP-dependent enzymes"/>
    <property type="match status" value="1"/>
</dbReference>
<dbReference type="PROSITE" id="PS00168">
    <property type="entry name" value="TRP_SYNTHASE_BETA"/>
    <property type="match status" value="1"/>
</dbReference>
<comment type="function">
    <text evidence="1">The beta subunit is responsible for the synthesis of L-tryptophan from indole and L-serine.</text>
</comment>
<comment type="catalytic activity">
    <reaction evidence="1">
        <text>(1S,2R)-1-C-(indol-3-yl)glycerol 3-phosphate + L-serine = D-glyceraldehyde 3-phosphate + L-tryptophan + H2O</text>
        <dbReference type="Rhea" id="RHEA:10532"/>
        <dbReference type="ChEBI" id="CHEBI:15377"/>
        <dbReference type="ChEBI" id="CHEBI:33384"/>
        <dbReference type="ChEBI" id="CHEBI:57912"/>
        <dbReference type="ChEBI" id="CHEBI:58866"/>
        <dbReference type="ChEBI" id="CHEBI:59776"/>
        <dbReference type="EC" id="4.2.1.20"/>
    </reaction>
</comment>
<comment type="cofactor">
    <cofactor evidence="1">
        <name>pyridoxal 5'-phosphate</name>
        <dbReference type="ChEBI" id="CHEBI:597326"/>
    </cofactor>
</comment>
<comment type="pathway">
    <text evidence="1">Amino-acid biosynthesis; L-tryptophan biosynthesis; L-tryptophan from chorismate: step 5/5.</text>
</comment>
<comment type="subunit">
    <text evidence="1">Tetramer of two alpha and two beta chains.</text>
</comment>
<comment type="similarity">
    <text evidence="1">Belongs to the TrpB family.</text>
</comment>
<feature type="chain" id="PRO_1000057866" description="Tryptophan synthase beta chain">
    <location>
        <begin position="1"/>
        <end position="425"/>
    </location>
</feature>
<feature type="modified residue" description="N6-(pyridoxal phosphate)lysine" evidence="1">
    <location>
        <position position="107"/>
    </location>
</feature>
<name>TRPB_SYNJB</name>
<keyword id="KW-0028">Amino-acid biosynthesis</keyword>
<keyword id="KW-0057">Aromatic amino acid biosynthesis</keyword>
<keyword id="KW-0456">Lyase</keyword>
<keyword id="KW-0663">Pyridoxal phosphate</keyword>
<keyword id="KW-1185">Reference proteome</keyword>
<keyword id="KW-0822">Tryptophan biosynthesis</keyword>